<organism>
    <name type="scientific">Mus musculus</name>
    <name type="common">Mouse</name>
    <dbReference type="NCBI Taxonomy" id="10090"/>
    <lineage>
        <taxon>Eukaryota</taxon>
        <taxon>Metazoa</taxon>
        <taxon>Chordata</taxon>
        <taxon>Craniata</taxon>
        <taxon>Vertebrata</taxon>
        <taxon>Euteleostomi</taxon>
        <taxon>Mammalia</taxon>
        <taxon>Eutheria</taxon>
        <taxon>Euarchontoglires</taxon>
        <taxon>Glires</taxon>
        <taxon>Rodentia</taxon>
        <taxon>Myomorpha</taxon>
        <taxon>Muroidea</taxon>
        <taxon>Muridae</taxon>
        <taxon>Murinae</taxon>
        <taxon>Mus</taxon>
        <taxon>Mus</taxon>
    </lineage>
</organism>
<sequence length="859" mass="97128">MLRGQAREEDSVVLIDMASPEAGNGCSYGSTAQASEAGKQQVAPSRVGSSAKPPIDFVLVWEEDLRNQENPTKDKTDTHEVWRETFLENLCLAGLKIDQHDVQDEAAAVHYILLRAPWAVLCYYAEDLRLKLPLQELPNQASNWSATLLEWLGIPNILLEHVPDTPPEYYSCQFKASKLQWFLGSDNQDTFFTSTKRHQILFEILAKTPYGHEKKGLFGIDQLLAEGVFSAAFPLHDGPFSAVPESSQVLGLIQRQVLFQHWARWGKWNKYQPLDHVRRYFGEKVALYFAWLGFYTGWLLPAAVVGTVVFLVGCFLVFSDIPTQELCHSSDSFDMCPLCSDCSFWLLSSACTLAQAGRLFDHGGTVFFSLFMALWAVLLLEYWKRKNATLAYRWDCSDYEDIEERPRPQFAATAPMTALNPITGEDEPYFPEKNRVRRMLAGSVVLLMMVAVVIMCLVSVILYRAVMAIIVSRSDNAFLSAWASRIASLTGSVVNLVFILILSKVYVLLAQVLTRWEMHRTQTEFEDAFTLKVFIFQFVNFYASPVYIAFFKGRFVGYPGNYHTLFGIRNEECPAGGCLSELAQELLVIMVGKQIINNVQEVLVPKLKGCWQKFSRGKKAGTGTHPAPWEADYELLPCEGLFHEYLEMVLQFGFVTIFVAACPLAPLFALLNNWVEIRLDARKFVCEYRRPVAERAQDIGIWFHILTGLTHLAVISNAFLLAFSSDFLPRVYYSWTHAPDLHGFLNFTLARAPPTFTSAHNRTCRYRAFRDDDGHYSPTYWTLLAIRLAFVIVFEHVVFSIGRVLDLLVPDIPESVEIKVKREYYLAKQALAENEALLGATGVKDDQPPSSEPSLGLPA</sequence>
<name>ANO7_MOUSE</name>
<proteinExistence type="evidence at protein level"/>
<reference key="1">
    <citation type="journal article" date="2009" name="PLoS Biol.">
        <title>Lineage-specific biology revealed by a finished genome assembly of the mouse.</title>
        <authorList>
            <person name="Church D.M."/>
            <person name="Goodstadt L."/>
            <person name="Hillier L.W."/>
            <person name="Zody M.C."/>
            <person name="Goldstein S."/>
            <person name="She X."/>
            <person name="Bult C.J."/>
            <person name="Agarwala R."/>
            <person name="Cherry J.L."/>
            <person name="DiCuccio M."/>
            <person name="Hlavina W."/>
            <person name="Kapustin Y."/>
            <person name="Meric P."/>
            <person name="Maglott D."/>
            <person name="Birtle Z."/>
            <person name="Marques A.C."/>
            <person name="Graves T."/>
            <person name="Zhou S."/>
            <person name="Teague B."/>
            <person name="Potamousis K."/>
            <person name="Churas C."/>
            <person name="Place M."/>
            <person name="Herschleb J."/>
            <person name="Runnheim R."/>
            <person name="Forrest D."/>
            <person name="Amos-Landgraf J."/>
            <person name="Schwartz D.C."/>
            <person name="Cheng Z."/>
            <person name="Lindblad-Toh K."/>
            <person name="Eichler E.E."/>
            <person name="Ponting C.P."/>
        </authorList>
    </citation>
    <scope>NUCLEOTIDE SEQUENCE [LARGE SCALE GENOMIC DNA]</scope>
    <source>
        <strain>C57BL/6J</strain>
    </source>
</reference>
<reference key="2">
    <citation type="journal article" date="2004" name="Genome Res.">
        <title>The status, quality, and expansion of the NIH full-length cDNA project: the Mammalian Gene Collection (MGC).</title>
        <authorList>
            <consortium name="The MGC Project Team"/>
        </authorList>
    </citation>
    <scope>NUCLEOTIDE SEQUENCE [LARGE SCALE MRNA] (ISOFORM 2)</scope>
</reference>
<reference key="3">
    <citation type="journal article" date="2004" name="Proc. Natl. Acad. Sci. U.S.A.">
        <title>NGEP, a gene encoding a membrane protein detected only in prostate cancer and normal prostate.</title>
        <authorList>
            <person name="Bera T.K."/>
            <person name="Das S."/>
            <person name="Maeda H."/>
            <person name="Beers R."/>
            <person name="Wolfgang C.D."/>
            <person name="Kumar V."/>
            <person name="Hahn Y."/>
            <person name="Lee B."/>
            <person name="Pastan I."/>
        </authorList>
    </citation>
    <scope>IDENTIFICATION</scope>
</reference>
<reference key="4">
    <citation type="journal article" date="2010" name="J. Biol. Chem.">
        <title>Expression and function of epithelial anoctamins.</title>
        <authorList>
            <person name="Schreiber R."/>
            <person name="Uliyakina I."/>
            <person name="Kongsuphol P."/>
            <person name="Warth R."/>
            <person name="Mirza M."/>
            <person name="Martins J.R."/>
            <person name="Kunzelmann K."/>
        </authorList>
    </citation>
    <scope>TISSUE SPECIFICITY</scope>
</reference>
<reference key="5">
    <citation type="journal article" date="2012" name="Exp. Physiol.">
        <title>The anoctamin (TMEM16) gene family: calcium-activated chloride channels come of age.</title>
        <authorList>
            <person name="Winpenny J.P."/>
            <person name="Gray M.A."/>
        </authorList>
    </citation>
    <scope>REVIEW</scope>
</reference>
<reference key="6">
    <citation type="journal article" date="2013" name="J. Biol. Chem.">
        <title>Calcium-dependent phospholipid scramblase activity of TMEM16 protein family members.</title>
        <authorList>
            <person name="Suzuki J."/>
            <person name="Fujii T."/>
            <person name="Imao T."/>
            <person name="Ishihara K."/>
            <person name="Kuba H."/>
            <person name="Nagata S."/>
        </authorList>
    </citation>
    <scope>FUNCTION</scope>
    <scope>CATALYTIC ACTIVITY</scope>
    <scope>TISSUE SPECIFICITY</scope>
</reference>
<comment type="function">
    <text evidence="1 5">Has calcium-dependent phospholipid scramblase activity; scrambles phosphatidylserine, phosphatidylcholine and galactosylceramide (PubMed:23532839). Does not exhibit calcium-activated chloride channel (CaCC) activity (PubMed:23532839). May play a role in cell-cell interactions (By similarity).</text>
</comment>
<comment type="catalytic activity">
    <reaction evidence="5">
        <text>a 1,2-diacyl-sn-glycero-3-phospho-L-serine(in) = a 1,2-diacyl-sn-glycero-3-phospho-L-serine(out)</text>
        <dbReference type="Rhea" id="RHEA:38663"/>
        <dbReference type="ChEBI" id="CHEBI:57262"/>
    </reaction>
    <physiologicalReaction direction="left-to-right" evidence="8">
        <dbReference type="Rhea" id="RHEA:38664"/>
    </physiologicalReaction>
</comment>
<comment type="catalytic activity">
    <reaction evidence="5">
        <text>a beta-D-galactosyl-(1&lt;-&gt;1')-N-acylsphing-4-enine(out) = a beta-D-galactosyl-(1&lt;-&gt;1')-N-acylsphing-4-enine(in)</text>
        <dbReference type="Rhea" id="RHEA:38899"/>
        <dbReference type="ChEBI" id="CHEBI:18390"/>
    </reaction>
    <physiologicalReaction direction="left-to-right" evidence="8">
        <dbReference type="Rhea" id="RHEA:38900"/>
    </physiologicalReaction>
</comment>
<comment type="catalytic activity">
    <reaction evidence="5">
        <text>a 1,2-diacyl-sn-glycero-3-phosphocholine(in) = a 1,2-diacyl-sn-glycero-3-phosphocholine(out)</text>
        <dbReference type="Rhea" id="RHEA:38571"/>
        <dbReference type="ChEBI" id="CHEBI:57643"/>
    </reaction>
    <physiologicalReaction direction="right-to-left" evidence="8">
        <dbReference type="Rhea" id="RHEA:38573"/>
    </physiologicalReaction>
</comment>
<comment type="subcellular location">
    <subcellularLocation>
        <location evidence="1">Cell membrane</location>
        <topology evidence="1">Multi-pass membrane protein</topology>
    </subcellularLocation>
    <subcellularLocation>
        <location evidence="1">Endoplasmic reticulum</location>
    </subcellularLocation>
    <text evidence="1">Concentrates at sites of cell-cell contact. Shows an intracellular localization.</text>
</comment>
<comment type="alternative products">
    <event type="alternative splicing"/>
    <isoform>
        <id>Q14AT5-1</id>
        <name>1</name>
        <sequence type="displayed"/>
    </isoform>
    <isoform>
        <id>Q14AT5-2</id>
        <name>2</name>
        <sequence type="described" ref="VSP_026009 VSP_026010"/>
    </isoform>
</comment>
<comment type="tissue specificity">
    <text evidence="4 5">Highly expressed in the stomach. Expressed at low levels in small intestine and large intestine.</text>
</comment>
<comment type="miscellaneous">
    <text>The term 'anoctamin' was coined because these channels are anion selective and have eight (OCT) transmembrane segments. There is some dissatisfaction in the field with the Ano nomenclature because it is not certain that all the members of this family are anion channels or have the 8-transmembrane topology.</text>
</comment>
<comment type="similarity">
    <text evidence="7">Belongs to the anoctamin family.</text>
</comment>
<gene>
    <name type="primary">Ano7</name>
    <name type="synonym">Ngep</name>
    <name type="synonym">Tmem16g</name>
</gene>
<feature type="chain" id="PRO_0000289327" description="Anoctamin-7">
    <location>
        <begin position="1"/>
        <end position="859"/>
    </location>
</feature>
<feature type="topological domain" description="Cytoplasmic" evidence="2">
    <location>
        <begin position="1"/>
        <end position="297"/>
    </location>
</feature>
<feature type="transmembrane region" description="Helical" evidence="2">
    <location>
        <begin position="298"/>
        <end position="318"/>
    </location>
</feature>
<feature type="topological domain" description="Extracellular" evidence="2">
    <location>
        <begin position="319"/>
        <end position="362"/>
    </location>
</feature>
<feature type="transmembrane region" description="Helical" evidence="2">
    <location>
        <begin position="363"/>
        <end position="383"/>
    </location>
</feature>
<feature type="topological domain" description="Cytoplasmic" evidence="2">
    <location>
        <begin position="384"/>
        <end position="441"/>
    </location>
</feature>
<feature type="transmembrane region" description="Helical" evidence="2">
    <location>
        <begin position="442"/>
        <end position="462"/>
    </location>
</feature>
<feature type="topological domain" description="Extracellular" evidence="2">
    <location>
        <begin position="463"/>
        <end position="492"/>
    </location>
</feature>
<feature type="transmembrane region" description="Helical" evidence="2">
    <location>
        <begin position="493"/>
        <end position="513"/>
    </location>
</feature>
<feature type="topological domain" description="Cytoplasmic" evidence="2">
    <location>
        <begin position="514"/>
        <end position="530"/>
    </location>
</feature>
<feature type="transmembrane region" description="Helical" evidence="2">
    <location>
        <begin position="531"/>
        <end position="551"/>
    </location>
</feature>
<feature type="topological domain" description="Extracellular" evidence="2">
    <location>
        <begin position="552"/>
        <end position="651"/>
    </location>
</feature>
<feature type="transmembrane region" description="Helical" evidence="2">
    <location>
        <begin position="652"/>
        <end position="672"/>
    </location>
</feature>
<feature type="topological domain" description="Cytoplasmic" evidence="2">
    <location>
        <begin position="673"/>
        <end position="700"/>
    </location>
</feature>
<feature type="transmembrane region" description="Helical" evidence="2">
    <location>
        <begin position="701"/>
        <end position="721"/>
    </location>
</feature>
<feature type="topological domain" description="Extracellular" evidence="2">
    <location>
        <begin position="722"/>
        <end position="780"/>
    </location>
</feature>
<feature type="transmembrane region" description="Helical" evidence="2">
    <location>
        <begin position="781"/>
        <end position="801"/>
    </location>
</feature>
<feature type="topological domain" description="Cytoplasmic" evidence="2">
    <location>
        <begin position="802"/>
        <end position="859"/>
    </location>
</feature>
<feature type="region of interest" description="Disordered" evidence="3">
    <location>
        <begin position="25"/>
        <end position="50"/>
    </location>
</feature>
<feature type="glycosylation site" description="N-linked (GlcNAc...) asparagine" evidence="2">
    <location>
        <position position="746"/>
    </location>
</feature>
<feature type="glycosylation site" description="N-linked (GlcNAc...) asparagine" evidence="2">
    <location>
        <position position="761"/>
    </location>
</feature>
<feature type="splice variant" id="VSP_026009" description="In isoform 2." evidence="6">
    <original>ALLGATGV</original>
    <variation>VTVGVTGG</variation>
    <location>
        <begin position="836"/>
        <end position="843"/>
    </location>
</feature>
<feature type="splice variant" id="VSP_026010" description="In isoform 2." evidence="6">
    <location>
        <begin position="844"/>
        <end position="859"/>
    </location>
</feature>
<accession>Q14AT5</accession>
<accession>Q6IFT5</accession>
<keyword id="KW-0025">Alternative splicing</keyword>
<keyword id="KW-1003">Cell membrane</keyword>
<keyword id="KW-0256">Endoplasmic reticulum</keyword>
<keyword id="KW-0325">Glycoprotein</keyword>
<keyword id="KW-0445">Lipid transport</keyword>
<keyword id="KW-0472">Membrane</keyword>
<keyword id="KW-1185">Reference proteome</keyword>
<keyword id="KW-0812">Transmembrane</keyword>
<keyword id="KW-1133">Transmembrane helix</keyword>
<keyword id="KW-0813">Transport</keyword>
<evidence type="ECO:0000250" key="1">
    <source>
        <dbReference type="UniProtKB" id="Q6IWH7"/>
    </source>
</evidence>
<evidence type="ECO:0000255" key="2"/>
<evidence type="ECO:0000256" key="3">
    <source>
        <dbReference type="SAM" id="MobiDB-lite"/>
    </source>
</evidence>
<evidence type="ECO:0000269" key="4">
    <source>
    </source>
</evidence>
<evidence type="ECO:0000269" key="5">
    <source>
    </source>
</evidence>
<evidence type="ECO:0000303" key="6">
    <source>
    </source>
</evidence>
<evidence type="ECO:0000305" key="7"/>
<evidence type="ECO:0000305" key="8">
    <source>
    </source>
</evidence>
<protein>
    <recommendedName>
        <fullName>Anoctamin-7</fullName>
    </recommendedName>
    <alternativeName>
        <fullName>New gene expressed in prostate homolog</fullName>
    </alternativeName>
    <alternativeName>
        <fullName>Transmembrane protein 16G</fullName>
    </alternativeName>
</protein>
<dbReference type="EMBL" id="AC108412">
    <property type="status" value="NOT_ANNOTATED_CDS"/>
    <property type="molecule type" value="Genomic_DNA"/>
</dbReference>
<dbReference type="EMBL" id="AC124669">
    <property type="status" value="NOT_ANNOTATED_CDS"/>
    <property type="molecule type" value="Genomic_DNA"/>
</dbReference>
<dbReference type="EMBL" id="BC116706">
    <property type="protein sequence ID" value="AAI16707.1"/>
    <property type="molecule type" value="mRNA"/>
</dbReference>
<dbReference type="EMBL" id="BK004075">
    <property type="protein sequence ID" value="DAA04566.1"/>
    <property type="molecule type" value="mRNA"/>
</dbReference>
<dbReference type="CCDS" id="CCDS15188.1">
    <molecule id="Q14AT5-1"/>
</dbReference>
<dbReference type="CCDS" id="CCDS78656.1">
    <molecule id="Q14AT5-2"/>
</dbReference>
<dbReference type="RefSeq" id="NP_001258813.1">
    <molecule id="Q14AT5-2"/>
    <property type="nucleotide sequence ID" value="NM_001271884.1"/>
</dbReference>
<dbReference type="RefSeq" id="NP_996914.1">
    <molecule id="Q14AT5-1"/>
    <property type="nucleotide sequence ID" value="NM_207031.2"/>
</dbReference>
<dbReference type="RefSeq" id="XP_006529796.1">
    <molecule id="Q14AT5-1"/>
    <property type="nucleotide sequence ID" value="XM_006529733.2"/>
</dbReference>
<dbReference type="SMR" id="Q14AT5"/>
<dbReference type="BioGRID" id="240364">
    <property type="interactions" value="3"/>
</dbReference>
<dbReference type="FunCoup" id="Q14AT5">
    <property type="interactions" value="43"/>
</dbReference>
<dbReference type="STRING" id="10090.ENSMUSP00000140438"/>
<dbReference type="SwissLipids" id="SLP:000000375"/>
<dbReference type="GlyCosmos" id="Q14AT5">
    <property type="glycosylation" value="2 sites, No reported glycans"/>
</dbReference>
<dbReference type="GlyGen" id="Q14AT5">
    <property type="glycosylation" value="2 sites"/>
</dbReference>
<dbReference type="iPTMnet" id="Q14AT5"/>
<dbReference type="PhosphoSitePlus" id="Q14AT5"/>
<dbReference type="PaxDb" id="10090-ENSMUSP00000140438"/>
<dbReference type="ProteomicsDB" id="296311">
    <molecule id="Q14AT5-1"/>
</dbReference>
<dbReference type="ProteomicsDB" id="296312">
    <molecule id="Q14AT5-2"/>
</dbReference>
<dbReference type="Antibodypedia" id="47723">
    <property type="antibodies" value="121 antibodies from 26 providers"/>
</dbReference>
<dbReference type="DNASU" id="404545"/>
<dbReference type="Ensembl" id="ENSMUST00000058682.11">
    <molecule id="Q14AT5-2"/>
    <property type="protein sequence ID" value="ENSMUSP00000050495.6"/>
    <property type="gene ID" value="ENSMUSG00000034107.11"/>
</dbReference>
<dbReference type="Ensembl" id="ENSMUST00000186641.7">
    <molecule id="Q14AT5-1"/>
    <property type="protein sequence ID" value="ENSMUSP00000140438.2"/>
    <property type="gene ID" value="ENSMUSG00000034107.11"/>
</dbReference>
<dbReference type="GeneID" id="404545"/>
<dbReference type="KEGG" id="mmu:404545"/>
<dbReference type="UCSC" id="uc007cdw.2">
    <molecule id="Q14AT5-1"/>
    <property type="organism name" value="mouse"/>
</dbReference>
<dbReference type="UCSC" id="uc033fku.1">
    <molecule id="Q14AT5-2"/>
    <property type="organism name" value="mouse"/>
</dbReference>
<dbReference type="AGR" id="MGI:3052714"/>
<dbReference type="CTD" id="50636"/>
<dbReference type="MGI" id="MGI:3052714">
    <property type="gene designation" value="Ano7"/>
</dbReference>
<dbReference type="VEuPathDB" id="HostDB:ENSMUSG00000034107"/>
<dbReference type="eggNOG" id="KOG2514">
    <property type="taxonomic scope" value="Eukaryota"/>
</dbReference>
<dbReference type="GeneTree" id="ENSGT00940000158551"/>
<dbReference type="HOGENOM" id="CLU_006685_0_1_1"/>
<dbReference type="InParanoid" id="Q14AT5"/>
<dbReference type="OMA" id="GLYCQDQ"/>
<dbReference type="OrthoDB" id="296386at2759"/>
<dbReference type="PhylomeDB" id="Q14AT5"/>
<dbReference type="TreeFam" id="TF314265"/>
<dbReference type="Reactome" id="R-MMU-2672351">
    <property type="pathway name" value="Stimuli-sensing channels"/>
</dbReference>
<dbReference type="BioGRID-ORCS" id="404545">
    <property type="hits" value="2 hits in 78 CRISPR screens"/>
</dbReference>
<dbReference type="PRO" id="PR:Q14AT5"/>
<dbReference type="Proteomes" id="UP000000589">
    <property type="component" value="Chromosome 1"/>
</dbReference>
<dbReference type="RNAct" id="Q14AT5">
    <property type="molecule type" value="protein"/>
</dbReference>
<dbReference type="Bgee" id="ENSMUSG00000034107">
    <property type="expression patterns" value="Expressed in duodenum and 34 other cell types or tissues"/>
</dbReference>
<dbReference type="ExpressionAtlas" id="Q14AT5">
    <property type="expression patterns" value="baseline and differential"/>
</dbReference>
<dbReference type="GO" id="GO:0005783">
    <property type="term" value="C:endoplasmic reticulum"/>
    <property type="evidence" value="ECO:0000250"/>
    <property type="project" value="UniProtKB"/>
</dbReference>
<dbReference type="GO" id="GO:0005634">
    <property type="term" value="C:nucleus"/>
    <property type="evidence" value="ECO:0000314"/>
    <property type="project" value="MGI"/>
</dbReference>
<dbReference type="GO" id="GO:0005886">
    <property type="term" value="C:plasma membrane"/>
    <property type="evidence" value="ECO:0000266"/>
    <property type="project" value="MGI"/>
</dbReference>
<dbReference type="GO" id="GO:0005229">
    <property type="term" value="F:intracellularly calcium-gated chloride channel activity"/>
    <property type="evidence" value="ECO:0000314"/>
    <property type="project" value="MGI"/>
</dbReference>
<dbReference type="GO" id="GO:0017128">
    <property type="term" value="F:phospholipid scramblase activity"/>
    <property type="evidence" value="ECO:0000314"/>
    <property type="project" value="MGI"/>
</dbReference>
<dbReference type="GO" id="GO:0046983">
    <property type="term" value="F:protein dimerization activity"/>
    <property type="evidence" value="ECO:0007669"/>
    <property type="project" value="InterPro"/>
</dbReference>
<dbReference type="GO" id="GO:0061591">
    <property type="term" value="P:calcium activated galactosylceramide scrambling"/>
    <property type="evidence" value="ECO:0000314"/>
    <property type="project" value="MGI"/>
</dbReference>
<dbReference type="GO" id="GO:0061590">
    <property type="term" value="P:calcium activated phosphatidylcholine scrambling"/>
    <property type="evidence" value="ECO:0000314"/>
    <property type="project" value="MGI"/>
</dbReference>
<dbReference type="GO" id="GO:0061589">
    <property type="term" value="P:calcium activated phosphatidylserine scrambling"/>
    <property type="evidence" value="ECO:0000314"/>
    <property type="project" value="MGI"/>
</dbReference>
<dbReference type="GO" id="GO:0006821">
    <property type="term" value="P:chloride transport"/>
    <property type="evidence" value="ECO:0000314"/>
    <property type="project" value="MGI"/>
</dbReference>
<dbReference type="GO" id="GO:0051649">
    <property type="term" value="P:establishment of localization in cell"/>
    <property type="evidence" value="ECO:0000314"/>
    <property type="project" value="MGI"/>
</dbReference>
<dbReference type="InterPro" id="IPR032394">
    <property type="entry name" value="Anoct_dimer"/>
</dbReference>
<dbReference type="InterPro" id="IPR007632">
    <property type="entry name" value="Anoctamin"/>
</dbReference>
<dbReference type="InterPro" id="IPR049452">
    <property type="entry name" value="Anoctamin_TM"/>
</dbReference>
<dbReference type="PANTHER" id="PTHR12308">
    <property type="entry name" value="ANOCTAMIN"/>
    <property type="match status" value="1"/>
</dbReference>
<dbReference type="PANTHER" id="PTHR12308:SF22">
    <property type="entry name" value="ANOCTAMIN-7"/>
    <property type="match status" value="1"/>
</dbReference>
<dbReference type="Pfam" id="PF16178">
    <property type="entry name" value="Anoct_dimer"/>
    <property type="match status" value="1"/>
</dbReference>
<dbReference type="Pfam" id="PF04547">
    <property type="entry name" value="Anoctamin"/>
    <property type="match status" value="1"/>
</dbReference>